<comment type="subcellular location">
    <subcellularLocation>
        <location evidence="1">Cell membrane</location>
        <topology evidence="1">Single-pass membrane protein</topology>
    </subcellularLocation>
</comment>
<comment type="similarity">
    <text evidence="1">Belongs to the UPF0370 family.</text>
</comment>
<dbReference type="EMBL" id="CP000948">
    <property type="protein sequence ID" value="ACB03624.1"/>
    <property type="molecule type" value="Genomic_DNA"/>
</dbReference>
<dbReference type="RefSeq" id="WP_000383836.1">
    <property type="nucleotide sequence ID" value="NC_010473.1"/>
</dbReference>
<dbReference type="SMR" id="B1XAE4"/>
<dbReference type="KEGG" id="ecd:ECDH10B_2638"/>
<dbReference type="HOGENOM" id="CLU_198936_0_0_6"/>
<dbReference type="GO" id="GO:0005886">
    <property type="term" value="C:plasma membrane"/>
    <property type="evidence" value="ECO:0007669"/>
    <property type="project" value="UniProtKB-SubCell"/>
</dbReference>
<dbReference type="HAMAP" id="MF_01566">
    <property type="entry name" value="UPF0370"/>
    <property type="match status" value="1"/>
</dbReference>
<dbReference type="InterPro" id="IPR020910">
    <property type="entry name" value="UPF0370"/>
</dbReference>
<dbReference type="NCBIfam" id="NF010185">
    <property type="entry name" value="PRK13664.1"/>
    <property type="match status" value="1"/>
</dbReference>
<dbReference type="Pfam" id="PF13980">
    <property type="entry name" value="UPF0370"/>
    <property type="match status" value="1"/>
</dbReference>
<gene>
    <name evidence="1" type="primary">ypfN</name>
    <name type="ordered locus">ECDH10B_2638</name>
</gene>
<feature type="chain" id="PRO_1000199718" description="UPF0370 protein YpfN">
    <location>
        <begin position="1"/>
        <end position="66"/>
    </location>
</feature>
<feature type="transmembrane region" description="Helical" evidence="1">
    <location>
        <begin position="4"/>
        <end position="24"/>
    </location>
</feature>
<feature type="region of interest" description="Disordered" evidence="2">
    <location>
        <begin position="39"/>
        <end position="66"/>
    </location>
</feature>
<feature type="compositionally biased region" description="Basic and acidic residues" evidence="2">
    <location>
        <begin position="42"/>
        <end position="51"/>
    </location>
</feature>
<sequence>MDWLAKYWWILVIVFLVGVLLNVIKDLKRVDHKKFLANKPELPPHRDFNDKWDDDDDWPKKDQPKK</sequence>
<protein>
    <recommendedName>
        <fullName evidence="1">UPF0370 protein YpfN</fullName>
    </recommendedName>
</protein>
<name>YPFN_ECODH</name>
<accession>B1XAE4</accession>
<proteinExistence type="inferred from homology"/>
<evidence type="ECO:0000255" key="1">
    <source>
        <dbReference type="HAMAP-Rule" id="MF_01566"/>
    </source>
</evidence>
<evidence type="ECO:0000256" key="2">
    <source>
        <dbReference type="SAM" id="MobiDB-lite"/>
    </source>
</evidence>
<keyword id="KW-1003">Cell membrane</keyword>
<keyword id="KW-0472">Membrane</keyword>
<keyword id="KW-0812">Transmembrane</keyword>
<keyword id="KW-1133">Transmembrane helix</keyword>
<organism>
    <name type="scientific">Escherichia coli (strain K12 / DH10B)</name>
    <dbReference type="NCBI Taxonomy" id="316385"/>
    <lineage>
        <taxon>Bacteria</taxon>
        <taxon>Pseudomonadati</taxon>
        <taxon>Pseudomonadota</taxon>
        <taxon>Gammaproteobacteria</taxon>
        <taxon>Enterobacterales</taxon>
        <taxon>Enterobacteriaceae</taxon>
        <taxon>Escherichia</taxon>
    </lineage>
</organism>
<reference key="1">
    <citation type="journal article" date="2008" name="J. Bacteriol.">
        <title>The complete genome sequence of Escherichia coli DH10B: insights into the biology of a laboratory workhorse.</title>
        <authorList>
            <person name="Durfee T."/>
            <person name="Nelson R."/>
            <person name="Baldwin S."/>
            <person name="Plunkett G. III"/>
            <person name="Burland V."/>
            <person name="Mau B."/>
            <person name="Petrosino J.F."/>
            <person name="Qin X."/>
            <person name="Muzny D.M."/>
            <person name="Ayele M."/>
            <person name="Gibbs R.A."/>
            <person name="Csorgo B."/>
            <person name="Posfai G."/>
            <person name="Weinstock G.M."/>
            <person name="Blattner F.R."/>
        </authorList>
    </citation>
    <scope>NUCLEOTIDE SEQUENCE [LARGE SCALE GENOMIC DNA]</scope>
    <source>
        <strain>K12 / DH10B</strain>
    </source>
</reference>